<feature type="chain" id="PRO_1000184432" description="ATP synthase subunit c">
    <location>
        <begin position="1"/>
        <end position="75"/>
    </location>
</feature>
<feature type="transmembrane region" description="Helical" evidence="1">
    <location>
        <begin position="9"/>
        <end position="29"/>
    </location>
</feature>
<feature type="transmembrane region" description="Helical" evidence="1">
    <location>
        <begin position="54"/>
        <end position="74"/>
    </location>
</feature>
<feature type="site" description="Reversibly protonated during proton transport" evidence="1">
    <location>
        <position position="58"/>
    </location>
</feature>
<gene>
    <name evidence="1" type="primary">atpE</name>
    <name type="ordered locus">SAR11_0117</name>
</gene>
<name>ATPL_PELUB</name>
<sequence>MELEAAKMIGAGLAAIALAGAGVGIGIIFGNYLSGAMRNPSAAQKQFPNLLLGFALAEATGLFGLVVALIILFAF</sequence>
<proteinExistence type="inferred from homology"/>
<dbReference type="EMBL" id="CP000084">
    <property type="protein sequence ID" value="AAZ20941.1"/>
    <property type="molecule type" value="Genomic_DNA"/>
</dbReference>
<dbReference type="RefSeq" id="WP_006997791.1">
    <property type="nucleotide sequence ID" value="NC_007205.1"/>
</dbReference>
<dbReference type="SMR" id="Q4FPE8"/>
<dbReference type="STRING" id="335992.SAR11_0117"/>
<dbReference type="GeneID" id="66294620"/>
<dbReference type="KEGG" id="pub:SAR11_0117"/>
<dbReference type="eggNOG" id="COG0636">
    <property type="taxonomic scope" value="Bacteria"/>
</dbReference>
<dbReference type="HOGENOM" id="CLU_148047_4_0_5"/>
<dbReference type="OrthoDB" id="9811093at2"/>
<dbReference type="Proteomes" id="UP000002528">
    <property type="component" value="Chromosome"/>
</dbReference>
<dbReference type="GO" id="GO:0005886">
    <property type="term" value="C:plasma membrane"/>
    <property type="evidence" value="ECO:0007669"/>
    <property type="project" value="UniProtKB-SubCell"/>
</dbReference>
<dbReference type="GO" id="GO:0045259">
    <property type="term" value="C:proton-transporting ATP synthase complex"/>
    <property type="evidence" value="ECO:0007669"/>
    <property type="project" value="UniProtKB-KW"/>
</dbReference>
<dbReference type="GO" id="GO:0033177">
    <property type="term" value="C:proton-transporting two-sector ATPase complex, proton-transporting domain"/>
    <property type="evidence" value="ECO:0007669"/>
    <property type="project" value="InterPro"/>
</dbReference>
<dbReference type="GO" id="GO:0008289">
    <property type="term" value="F:lipid binding"/>
    <property type="evidence" value="ECO:0007669"/>
    <property type="project" value="UniProtKB-KW"/>
</dbReference>
<dbReference type="GO" id="GO:0046933">
    <property type="term" value="F:proton-transporting ATP synthase activity, rotational mechanism"/>
    <property type="evidence" value="ECO:0007669"/>
    <property type="project" value="UniProtKB-UniRule"/>
</dbReference>
<dbReference type="FunFam" id="1.20.20.10:FF:000008">
    <property type="entry name" value="ATPase subunit 9 homolog"/>
    <property type="match status" value="1"/>
</dbReference>
<dbReference type="Gene3D" id="1.20.20.10">
    <property type="entry name" value="F1F0 ATP synthase subunit C"/>
    <property type="match status" value="1"/>
</dbReference>
<dbReference type="HAMAP" id="MF_01396">
    <property type="entry name" value="ATP_synth_c_bact"/>
    <property type="match status" value="1"/>
</dbReference>
<dbReference type="InterPro" id="IPR000454">
    <property type="entry name" value="ATP_synth_F0_csu"/>
</dbReference>
<dbReference type="InterPro" id="IPR038662">
    <property type="entry name" value="ATP_synth_F0_csu_sf"/>
</dbReference>
<dbReference type="InterPro" id="IPR002379">
    <property type="entry name" value="ATPase_proteolipid_c-like_dom"/>
</dbReference>
<dbReference type="InterPro" id="IPR035921">
    <property type="entry name" value="F/V-ATP_Csub_sf"/>
</dbReference>
<dbReference type="NCBIfam" id="NF005733">
    <property type="entry name" value="PRK07558.1"/>
    <property type="match status" value="1"/>
</dbReference>
<dbReference type="PANTHER" id="PTHR10031">
    <property type="entry name" value="ATP SYNTHASE LIPID-BINDING PROTEIN, MITOCHONDRIAL"/>
    <property type="match status" value="1"/>
</dbReference>
<dbReference type="PANTHER" id="PTHR10031:SF0">
    <property type="entry name" value="ATPASE PROTEIN 9"/>
    <property type="match status" value="1"/>
</dbReference>
<dbReference type="Pfam" id="PF00137">
    <property type="entry name" value="ATP-synt_C"/>
    <property type="match status" value="1"/>
</dbReference>
<dbReference type="PRINTS" id="PR00124">
    <property type="entry name" value="ATPASEC"/>
</dbReference>
<dbReference type="SUPFAM" id="SSF81333">
    <property type="entry name" value="F1F0 ATP synthase subunit C"/>
    <property type="match status" value="1"/>
</dbReference>
<reference key="1">
    <citation type="journal article" date="2005" name="Science">
        <title>Genome streamlining in a cosmopolitan oceanic bacterium.</title>
        <authorList>
            <person name="Giovannoni S.J."/>
            <person name="Tripp H.J."/>
            <person name="Givan S."/>
            <person name="Podar M."/>
            <person name="Vergin K.L."/>
            <person name="Baptista D."/>
            <person name="Bibbs L."/>
            <person name="Eads J."/>
            <person name="Richardson T.H."/>
            <person name="Noordewier M."/>
            <person name="Rappe M.S."/>
            <person name="Short J.M."/>
            <person name="Carrington J.C."/>
            <person name="Mathur E.J."/>
        </authorList>
    </citation>
    <scope>NUCLEOTIDE SEQUENCE [LARGE SCALE GENOMIC DNA]</scope>
    <source>
        <strain>HTCC1062</strain>
    </source>
</reference>
<evidence type="ECO:0000255" key="1">
    <source>
        <dbReference type="HAMAP-Rule" id="MF_01396"/>
    </source>
</evidence>
<protein>
    <recommendedName>
        <fullName evidence="1">ATP synthase subunit c</fullName>
    </recommendedName>
    <alternativeName>
        <fullName evidence="1">ATP synthase F(0) sector subunit c</fullName>
    </alternativeName>
    <alternativeName>
        <fullName evidence="1">F-type ATPase subunit c</fullName>
        <shortName evidence="1">F-ATPase subunit c</shortName>
    </alternativeName>
    <alternativeName>
        <fullName evidence="1">Lipid-binding protein</fullName>
    </alternativeName>
</protein>
<comment type="function">
    <text evidence="1">F(1)F(0) ATP synthase produces ATP from ADP in the presence of a proton or sodium gradient. F-type ATPases consist of two structural domains, F(1) containing the extramembraneous catalytic core and F(0) containing the membrane proton channel, linked together by a central stalk and a peripheral stalk. During catalysis, ATP synthesis in the catalytic domain of F(1) is coupled via a rotary mechanism of the central stalk subunits to proton translocation.</text>
</comment>
<comment type="function">
    <text evidence="1">Key component of the F(0) channel; it plays a direct role in translocation across the membrane. A homomeric c-ring of between 10-14 subunits forms the central stalk rotor element with the F(1) delta and epsilon subunits.</text>
</comment>
<comment type="subunit">
    <text evidence="1">F-type ATPases have 2 components, F(1) - the catalytic core - and F(0) - the membrane proton channel. F(1) has five subunits: alpha(3), beta(3), gamma(1), delta(1), epsilon(1). F(0) has three main subunits: a(1), b(2) and c(10-14). The alpha and beta chains form an alternating ring which encloses part of the gamma chain. F(1) is attached to F(0) by a central stalk formed by the gamma and epsilon chains, while a peripheral stalk is formed by the delta and b chains.</text>
</comment>
<comment type="subcellular location">
    <subcellularLocation>
        <location evidence="1">Cell inner membrane</location>
        <topology evidence="1">Multi-pass membrane protein</topology>
    </subcellularLocation>
</comment>
<comment type="similarity">
    <text evidence="1">Belongs to the ATPase C chain family.</text>
</comment>
<organism>
    <name type="scientific">Pelagibacter ubique (strain HTCC1062)</name>
    <dbReference type="NCBI Taxonomy" id="335992"/>
    <lineage>
        <taxon>Bacteria</taxon>
        <taxon>Pseudomonadati</taxon>
        <taxon>Pseudomonadota</taxon>
        <taxon>Alphaproteobacteria</taxon>
        <taxon>Candidatus Pelagibacterales</taxon>
        <taxon>Candidatus Pelagibacteraceae</taxon>
        <taxon>Candidatus Pelagibacter</taxon>
    </lineage>
</organism>
<keyword id="KW-0066">ATP synthesis</keyword>
<keyword id="KW-0997">Cell inner membrane</keyword>
<keyword id="KW-1003">Cell membrane</keyword>
<keyword id="KW-0138">CF(0)</keyword>
<keyword id="KW-0375">Hydrogen ion transport</keyword>
<keyword id="KW-0406">Ion transport</keyword>
<keyword id="KW-0446">Lipid-binding</keyword>
<keyword id="KW-0472">Membrane</keyword>
<keyword id="KW-1185">Reference proteome</keyword>
<keyword id="KW-0812">Transmembrane</keyword>
<keyword id="KW-1133">Transmembrane helix</keyword>
<keyword id="KW-0813">Transport</keyword>
<accession>Q4FPE8</accession>